<name>DHX36_HUMAN</name>
<evidence type="ECO:0000250" key="1">
    <source>
        <dbReference type="UniProtKB" id="D4A2Z8"/>
    </source>
</evidence>
<evidence type="ECO:0000250" key="2">
    <source>
        <dbReference type="UniProtKB" id="Q05B79"/>
    </source>
</evidence>
<evidence type="ECO:0000250" key="3">
    <source>
        <dbReference type="UniProtKB" id="Q8VHK9"/>
    </source>
</evidence>
<evidence type="ECO:0000255" key="4"/>
<evidence type="ECO:0000255" key="5">
    <source>
        <dbReference type="PROSITE-ProRule" id="PRU00541"/>
    </source>
</evidence>
<evidence type="ECO:0000255" key="6">
    <source>
        <dbReference type="PROSITE-ProRule" id="PRU00542"/>
    </source>
</evidence>
<evidence type="ECO:0000256" key="7">
    <source>
        <dbReference type="SAM" id="MobiDB-lite"/>
    </source>
</evidence>
<evidence type="ECO:0000269" key="8">
    <source>
    </source>
</evidence>
<evidence type="ECO:0000269" key="9">
    <source>
    </source>
</evidence>
<evidence type="ECO:0000269" key="10">
    <source>
    </source>
</evidence>
<evidence type="ECO:0000269" key="11">
    <source>
    </source>
</evidence>
<evidence type="ECO:0000269" key="12">
    <source>
    </source>
</evidence>
<evidence type="ECO:0000269" key="13">
    <source>
    </source>
</evidence>
<evidence type="ECO:0000269" key="14">
    <source>
    </source>
</evidence>
<evidence type="ECO:0000269" key="15">
    <source>
    </source>
</evidence>
<evidence type="ECO:0000269" key="16">
    <source>
    </source>
</evidence>
<evidence type="ECO:0000269" key="17">
    <source>
    </source>
</evidence>
<evidence type="ECO:0000269" key="18">
    <source>
    </source>
</evidence>
<evidence type="ECO:0000269" key="19">
    <source>
    </source>
</evidence>
<evidence type="ECO:0000269" key="20">
    <source>
    </source>
</evidence>
<evidence type="ECO:0000269" key="21">
    <source>
    </source>
</evidence>
<evidence type="ECO:0000269" key="22">
    <source>
    </source>
</evidence>
<evidence type="ECO:0000269" key="23">
    <source>
    </source>
</evidence>
<evidence type="ECO:0000269" key="24">
    <source>
    </source>
</evidence>
<evidence type="ECO:0000269" key="25">
    <source>
    </source>
</evidence>
<evidence type="ECO:0000269" key="26">
    <source>
    </source>
</evidence>
<evidence type="ECO:0000269" key="27">
    <source>
    </source>
</evidence>
<evidence type="ECO:0000269" key="28">
    <source>
    </source>
</evidence>
<evidence type="ECO:0000269" key="29">
    <source>
    </source>
</evidence>
<evidence type="ECO:0000303" key="30">
    <source>
    </source>
</evidence>
<evidence type="ECO:0000303" key="31">
    <source>
    </source>
</evidence>
<evidence type="ECO:0000303" key="32">
    <source>
    </source>
</evidence>
<evidence type="ECO:0000303" key="33">
    <source>
    </source>
</evidence>
<evidence type="ECO:0000305" key="34"/>
<evidence type="ECO:0000312" key="35">
    <source>
        <dbReference type="HGNC" id="HGNC:14410"/>
    </source>
</evidence>
<evidence type="ECO:0007744" key="36">
    <source>
        <dbReference type="PDB" id="2N16"/>
    </source>
</evidence>
<evidence type="ECO:0007744" key="37">
    <source>
        <dbReference type="PDB" id="2N21"/>
    </source>
</evidence>
<evidence type="ECO:0007744" key="38">
    <source>
    </source>
</evidence>
<evidence type="ECO:0007744" key="39">
    <source>
    </source>
</evidence>
<evidence type="ECO:0007829" key="40">
    <source>
        <dbReference type="PDB" id="6Q6R"/>
    </source>
</evidence>
<accession>Q9H2U1</accession>
<accession>B2RB00</accession>
<accession>Q70JU3</accession>
<accession>Q8IYE5</accession>
<accession>Q9P240</accession>
<gene>
    <name evidence="35" type="primary">DHX36</name>
    <name evidence="30" type="synonym">DDX36</name>
    <name type="synonym">KIAA1488</name>
    <name evidence="31" type="synonym">MLEL1</name>
    <name evidence="31" type="synonym">RHAU</name>
</gene>
<feature type="chain" id="PRO_0000247530" description="ATP-dependent DNA/RNA helicase DHX36">
    <location>
        <begin position="1"/>
        <end position="1008"/>
    </location>
</feature>
<feature type="domain" description="Helicase ATP-binding" evidence="5">
    <location>
        <begin position="217"/>
        <end position="387"/>
    </location>
</feature>
<feature type="domain" description="Helicase C-terminal" evidence="6">
    <location>
        <begin position="477"/>
        <end position="647"/>
    </location>
</feature>
<feature type="region of interest" description="Necessary for nuclear and nucleolar caps localizations" evidence="13">
    <location>
        <begin position="1"/>
        <end position="200"/>
    </location>
</feature>
<feature type="region of interest" description="Required for the pre-miR-134 transport" evidence="1">
    <location>
        <begin position="1"/>
        <end position="104"/>
    </location>
</feature>
<feature type="region of interest" description="Disordered" evidence="7">
    <location>
        <begin position="1"/>
        <end position="58"/>
    </location>
</feature>
<feature type="region of interest" description="Required for recruitment to cytoplasmic stress granules" evidence="15">
    <location>
        <begin position="1"/>
        <end position="51"/>
    </location>
</feature>
<feature type="region of interest" description="Required for G4-DNA- and G4-RNA-binding" evidence="17 19 22">
    <location>
        <begin position="53"/>
        <end position="105"/>
    </location>
</feature>
<feature type="region of interest" description="DSM (DHX36-specific motif)" evidence="16 21 23 26 28">
    <location>
        <begin position="53"/>
        <end position="75"/>
    </location>
</feature>
<feature type="region of interest" description="RecA-like domain 1" evidence="2">
    <location>
        <begin position="106"/>
        <end position="386"/>
    </location>
</feature>
<feature type="region of interest" description="Necessary for interaction with single-stranded DNA at the 3'-end of the G4-DNA structure" evidence="2">
    <location>
        <begin position="265"/>
        <end position="317"/>
    </location>
</feature>
<feature type="region of interest" description="RecA-like domain 2" evidence="2">
    <location>
        <begin position="387"/>
        <end position="628"/>
    </location>
</feature>
<feature type="region of interest" description="Necessary for interaction with single-stranded DNA at the 3'-end of the G4-DNA structure" evidence="2">
    <location>
        <begin position="498"/>
        <end position="557"/>
    </location>
</feature>
<feature type="region of interest" description="WH domain" evidence="2">
    <location>
        <begin position="629"/>
        <end position="698"/>
    </location>
</feature>
<feature type="region of interest" description="Necessary for interaction with single-stranded DNA at the 3'-end of the G4-DNA structure" evidence="2">
    <location>
        <begin position="638"/>
        <end position="697"/>
    </location>
</feature>
<feature type="region of interest" description="OB-fold-like subdomains" evidence="2">
    <location>
        <begin position="841"/>
        <end position="905"/>
    </location>
</feature>
<feature type="region of interest" description="Necessary for interaction with single-stranded DNA at the 3'-end of the G4-DNA structure" evidence="2">
    <location>
        <begin position="849"/>
        <end position="860"/>
    </location>
</feature>
<feature type="region of interest" description="Necessary for interaction with single-stranded DNA at the 3'-end of the G4-DNA structure" evidence="2">
    <location>
        <begin position="870"/>
        <end position="900"/>
    </location>
</feature>
<feature type="coiled-coil region" evidence="4">
    <location>
        <begin position="72"/>
        <end position="157"/>
    </location>
</feature>
<feature type="short sequence motif" description="DEAH box" evidence="5">
    <location>
        <begin position="334"/>
        <end position="337"/>
    </location>
</feature>
<feature type="short sequence motif" description="Nuclear localization signal" evidence="31">
    <location>
        <begin position="517"/>
        <end position="528"/>
    </location>
</feature>
<feature type="compositionally biased region" description="Gly residues" evidence="7">
    <location>
        <begin position="16"/>
        <end position="48"/>
    </location>
</feature>
<feature type="binding site" evidence="2">
    <location>
        <begin position="233"/>
        <end position="238"/>
    </location>
    <ligand>
        <name>ATP</name>
        <dbReference type="ChEBI" id="CHEBI:30616"/>
    </ligand>
</feature>
<feature type="binding site" evidence="2">
    <location>
        <position position="335"/>
    </location>
    <ligand>
        <name>Mg(2+)</name>
        <dbReference type="ChEBI" id="CHEBI:18420"/>
    </ligand>
</feature>
<feature type="binding site" evidence="2">
    <location>
        <position position="337"/>
    </location>
    <ligand>
        <name>Mg(2+)</name>
        <dbReference type="ChEBI" id="CHEBI:18420"/>
    </ligand>
</feature>
<feature type="binding site" evidence="2">
    <location>
        <position position="557"/>
    </location>
    <ligand>
        <name>ATP</name>
        <dbReference type="ChEBI" id="CHEBI:30616"/>
    </ligand>
</feature>
<feature type="binding site" evidence="2">
    <location>
        <begin position="602"/>
        <end position="605"/>
    </location>
    <ligand>
        <name>ATP</name>
        <dbReference type="ChEBI" id="CHEBI:30616"/>
    </ligand>
</feature>
<feature type="modified residue" description="Phosphoserine" evidence="39">
    <location>
        <position position="161"/>
    </location>
</feature>
<feature type="modified residue" description="N6-acetyllysine" evidence="38">
    <location>
        <position position="947"/>
    </location>
</feature>
<feature type="modified residue" description="Phosphoserine" evidence="39">
    <location>
        <position position="963"/>
    </location>
</feature>
<feature type="splice variant" id="VSP_020006" description="In isoform 2." evidence="31">
    <location>
        <begin position="517"/>
        <end position="530"/>
    </location>
</feature>
<feature type="splice variant" id="VSP_020007" description="In isoform 3." evidence="32">
    <location>
        <begin position="737"/>
        <end position="765"/>
    </location>
</feature>
<feature type="sequence variant" id="VAR_027140" description="In dbSNP:rs1058299.">
    <original>E</original>
    <variation>K</variation>
    <location>
        <position position="151"/>
    </location>
</feature>
<feature type="sequence variant" id="VAR_027141" description="In dbSNP:rs9438." evidence="8 9 10">
    <original>S</original>
    <variation>C</variation>
    <location>
        <position position="416"/>
    </location>
</feature>
<feature type="sequence variant" id="VAR_027142" description="In dbSNP:rs17853513." evidence="10">
    <original>I</original>
    <variation>N</variation>
    <location>
        <position position="583"/>
    </location>
</feature>
<feature type="mutagenesis site" description="Reduces G4-RNA binding; when associated with A-57, A-59, A-62 and A-63." evidence="16">
    <original>P</original>
    <variation>G</variation>
    <location>
        <position position="54"/>
    </location>
</feature>
<feature type="mutagenesis site" description="Inhibits G4-DNA-binding; when associated with L-59 and L-63." evidence="26">
    <original>G</original>
    <variation>L</variation>
    <location>
        <position position="55"/>
    </location>
</feature>
<feature type="mutagenesis site" description="Reduces G4-RNA-binding; when associated with G-54, A-59, A-62 and A-63." evidence="16">
    <original>L</original>
    <variation>A</variation>
    <location>
        <position position="57"/>
    </location>
</feature>
<feature type="mutagenesis site" description="Reduces G4-RNA-binding; when associated with G-54, A-57, A-62 and A-63." evidence="16">
    <original>G</original>
    <variation>A</variation>
    <location>
        <position position="59"/>
    </location>
</feature>
<feature type="mutagenesis site" description="Inhibits G4-DNA-binding; when associated with L-55 and L-63." evidence="26">
    <original>G</original>
    <variation>L</variation>
    <location>
        <position position="59"/>
    </location>
</feature>
<feature type="mutagenesis site" description="Greatly reduces G4-RNA-binding; when associated with P-63." evidence="16">
    <original>G</original>
    <variation>P</variation>
    <location>
        <position position="59"/>
    </location>
</feature>
<feature type="mutagenesis site" description="Reduces G4-RNA-binding; when associated with G-54, A-57, A-59 and A-63." evidence="16">
    <original>I</original>
    <variation>A</variation>
    <location>
        <position position="62"/>
    </location>
</feature>
<feature type="mutagenesis site" description="Reduces G4-RNA-binding; when associated with G-54, A-57, A-59 and A-62." evidence="16">
    <original>G</original>
    <variation>A</variation>
    <location>
        <position position="63"/>
    </location>
</feature>
<feature type="mutagenesis site" description="Inhibits G4-DNA-binding; when associated with L-55 and L-59." evidence="26">
    <original>G</original>
    <variation>L</variation>
    <location>
        <position position="63"/>
    </location>
</feature>
<feature type="mutagenesis site" description="Greatly reduces G4-RNA-binding; when associated with P-59." evidence="16">
    <original>G</original>
    <variation>P</variation>
    <location>
        <position position="63"/>
    </location>
</feature>
<feature type="mutagenesis site" description="Does not inhibit G4-DNA-binding; when associated with A-66." evidence="26">
    <original>W</original>
    <variation>A</variation>
    <location>
        <position position="65"/>
    </location>
</feature>
<feature type="mutagenesis site" description="Does not inhibit G4-DNA-binding; when associated with A-65." evidence="26">
    <original>Y</original>
    <variation>A</variation>
    <location>
        <position position="66"/>
    </location>
</feature>
<feature type="mutagenesis site" description="Loss of ATPase activity; results in an increased in G4-DNA- and G4-RNA-binding stabilities, increases localization in cytoplasmic stress granules and loss of mRNA deadenylation and mRNA decay." evidence="9 13 15 19">
    <original>E</original>
    <variation>A</variation>
    <location>
        <position position="335"/>
    </location>
</feature>
<feature type="helix" evidence="40">
    <location>
        <begin position="60"/>
        <end position="67"/>
    </location>
</feature>
<proteinExistence type="evidence at protein level"/>
<reference key="1">
    <citation type="journal article" date="2002" name="Sheng Wu Hua Xue Yu Sheng Wu Wu Li Xue Bao">
        <title>Molecular cloning and characterization of human DDX36 and mouse Ddx36 genes, new members of the DEAD/H box superfamily.</title>
        <authorList>
            <person name="Fu J.-J."/>
            <person name="Li L.-Y."/>
            <person name="Lu G.-X."/>
        </authorList>
    </citation>
    <scope>NUCLEOTIDE SEQUENCE [MRNA] (ISOFORM 1)</scope>
    <scope>TISSUE SPECIFICITY</scope>
    <scope>VARIANT CYS-416</scope>
    <source>
        <tissue>Brain</tissue>
    </source>
</reference>
<reference key="2">
    <citation type="journal article" date="2004" name="Mol. Cell">
        <title>Facilitation of mRNA deadenylation and decay by the exosome-bound, DExH protein RHAU.</title>
        <authorList>
            <person name="Tran H."/>
            <person name="Schilling M."/>
            <person name="Wirbelauer C."/>
            <person name="Hess D."/>
            <person name="Nagamine Y."/>
        </authorList>
    </citation>
    <scope>NUCLEOTIDE SEQUENCE [MRNA] (ISOFORMS 1 AND 2)</scope>
    <scope>FUNCTION</scope>
    <scope>AU-RICH RNA-BINDING</scope>
    <scope>SUBCELLULAR LOCATION</scope>
    <scope>ACTIVITY REGULATION</scope>
    <scope>ALTERNATIVE SPLICING</scope>
    <scope>TISSUE SPECIFICITY</scope>
    <scope>INTERACTION WITH ELAVL1; ILF3; PARN; EXOSC3 AND EXOSC10</scope>
    <scope>MUTAGENESIS OF GLU-335</scope>
    <scope>VARIANT CYS-416</scope>
    <scope>NUCLEAR LOCALIZATION SIGNAL</scope>
    <scope>IDENTIFICATION BY MASS SPECTROMETRY</scope>
</reference>
<reference key="3">
    <citation type="journal article" date="2004" name="Nat. Genet.">
        <title>Complete sequencing and characterization of 21,243 full-length human cDNAs.</title>
        <authorList>
            <person name="Ota T."/>
            <person name="Suzuki Y."/>
            <person name="Nishikawa T."/>
            <person name="Otsuki T."/>
            <person name="Sugiyama T."/>
            <person name="Irie R."/>
            <person name="Wakamatsu A."/>
            <person name="Hayashi K."/>
            <person name="Sato H."/>
            <person name="Nagai K."/>
            <person name="Kimura K."/>
            <person name="Makita H."/>
            <person name="Sekine M."/>
            <person name="Obayashi M."/>
            <person name="Nishi T."/>
            <person name="Shibahara T."/>
            <person name="Tanaka T."/>
            <person name="Ishii S."/>
            <person name="Yamamoto J."/>
            <person name="Saito K."/>
            <person name="Kawai Y."/>
            <person name="Isono Y."/>
            <person name="Nakamura Y."/>
            <person name="Nagahari K."/>
            <person name="Murakami K."/>
            <person name="Yasuda T."/>
            <person name="Iwayanagi T."/>
            <person name="Wagatsuma M."/>
            <person name="Shiratori A."/>
            <person name="Sudo H."/>
            <person name="Hosoiri T."/>
            <person name="Kaku Y."/>
            <person name="Kodaira H."/>
            <person name="Kondo H."/>
            <person name="Sugawara M."/>
            <person name="Takahashi M."/>
            <person name="Kanda K."/>
            <person name="Yokoi T."/>
            <person name="Furuya T."/>
            <person name="Kikkawa E."/>
            <person name="Omura Y."/>
            <person name="Abe K."/>
            <person name="Kamihara K."/>
            <person name="Katsuta N."/>
            <person name="Sato K."/>
            <person name="Tanikawa M."/>
            <person name="Yamazaki M."/>
            <person name="Ninomiya K."/>
            <person name="Ishibashi T."/>
            <person name="Yamashita H."/>
            <person name="Murakawa K."/>
            <person name="Fujimori K."/>
            <person name="Tanai H."/>
            <person name="Kimata M."/>
            <person name="Watanabe M."/>
            <person name="Hiraoka S."/>
            <person name="Chiba Y."/>
            <person name="Ishida S."/>
            <person name="Ono Y."/>
            <person name="Takiguchi S."/>
            <person name="Watanabe S."/>
            <person name="Yosida M."/>
            <person name="Hotuta T."/>
            <person name="Kusano J."/>
            <person name="Kanehori K."/>
            <person name="Takahashi-Fujii A."/>
            <person name="Hara H."/>
            <person name="Tanase T.-O."/>
            <person name="Nomura Y."/>
            <person name="Togiya S."/>
            <person name="Komai F."/>
            <person name="Hara R."/>
            <person name="Takeuchi K."/>
            <person name="Arita M."/>
            <person name="Imose N."/>
            <person name="Musashino K."/>
            <person name="Yuuki H."/>
            <person name="Oshima A."/>
            <person name="Sasaki N."/>
            <person name="Aotsuka S."/>
            <person name="Yoshikawa Y."/>
            <person name="Matsunawa H."/>
            <person name="Ichihara T."/>
            <person name="Shiohata N."/>
            <person name="Sano S."/>
            <person name="Moriya S."/>
            <person name="Momiyama H."/>
            <person name="Satoh N."/>
            <person name="Takami S."/>
            <person name="Terashima Y."/>
            <person name="Suzuki O."/>
            <person name="Nakagawa S."/>
            <person name="Senoh A."/>
            <person name="Mizoguchi H."/>
            <person name="Goto Y."/>
            <person name="Shimizu F."/>
            <person name="Wakebe H."/>
            <person name="Hishigaki H."/>
            <person name="Watanabe T."/>
            <person name="Sugiyama A."/>
            <person name="Takemoto M."/>
            <person name="Kawakami B."/>
            <person name="Yamazaki M."/>
            <person name="Watanabe K."/>
            <person name="Kumagai A."/>
            <person name="Itakura S."/>
            <person name="Fukuzumi Y."/>
            <person name="Fujimori Y."/>
            <person name="Komiyama M."/>
            <person name="Tashiro H."/>
            <person name="Tanigami A."/>
            <person name="Fujiwara T."/>
            <person name="Ono T."/>
            <person name="Yamada K."/>
            <person name="Fujii Y."/>
            <person name="Ozaki K."/>
            <person name="Hirao M."/>
            <person name="Ohmori Y."/>
            <person name="Kawabata A."/>
            <person name="Hikiji T."/>
            <person name="Kobatake N."/>
            <person name="Inagaki H."/>
            <person name="Ikema Y."/>
            <person name="Okamoto S."/>
            <person name="Okitani R."/>
            <person name="Kawakami T."/>
            <person name="Noguchi S."/>
            <person name="Itoh T."/>
            <person name="Shigeta K."/>
            <person name="Senba T."/>
            <person name="Matsumura K."/>
            <person name="Nakajima Y."/>
            <person name="Mizuno T."/>
            <person name="Morinaga M."/>
            <person name="Sasaki M."/>
            <person name="Togashi T."/>
            <person name="Oyama M."/>
            <person name="Hata H."/>
            <person name="Watanabe M."/>
            <person name="Komatsu T."/>
            <person name="Mizushima-Sugano J."/>
            <person name="Satoh T."/>
            <person name="Shirai Y."/>
            <person name="Takahashi Y."/>
            <person name="Nakagawa K."/>
            <person name="Okumura K."/>
            <person name="Nagase T."/>
            <person name="Nomura N."/>
            <person name="Kikuchi H."/>
            <person name="Masuho Y."/>
            <person name="Yamashita R."/>
            <person name="Nakai K."/>
            <person name="Yada T."/>
            <person name="Nakamura Y."/>
            <person name="Ohara O."/>
            <person name="Isogai T."/>
            <person name="Sugano S."/>
        </authorList>
    </citation>
    <scope>NUCLEOTIDE SEQUENCE [LARGE SCALE MRNA] (ISOFORM 1)</scope>
    <source>
        <tissue>Testis</tissue>
    </source>
</reference>
<reference key="4">
    <citation type="journal article" date="2006" name="Nature">
        <title>The DNA sequence, annotation and analysis of human chromosome 3.</title>
        <authorList>
            <person name="Muzny D.M."/>
            <person name="Scherer S.E."/>
            <person name="Kaul R."/>
            <person name="Wang J."/>
            <person name="Yu J."/>
            <person name="Sudbrak R."/>
            <person name="Buhay C.J."/>
            <person name="Chen R."/>
            <person name="Cree A."/>
            <person name="Ding Y."/>
            <person name="Dugan-Rocha S."/>
            <person name="Gill R."/>
            <person name="Gunaratne P."/>
            <person name="Harris R.A."/>
            <person name="Hawes A.C."/>
            <person name="Hernandez J."/>
            <person name="Hodgson A.V."/>
            <person name="Hume J."/>
            <person name="Jackson A."/>
            <person name="Khan Z.M."/>
            <person name="Kovar-Smith C."/>
            <person name="Lewis L.R."/>
            <person name="Lozado R.J."/>
            <person name="Metzker M.L."/>
            <person name="Milosavljevic A."/>
            <person name="Miner G.R."/>
            <person name="Morgan M.B."/>
            <person name="Nazareth L.V."/>
            <person name="Scott G."/>
            <person name="Sodergren E."/>
            <person name="Song X.-Z."/>
            <person name="Steffen D."/>
            <person name="Wei S."/>
            <person name="Wheeler D.A."/>
            <person name="Wright M.W."/>
            <person name="Worley K.C."/>
            <person name="Yuan Y."/>
            <person name="Zhang Z."/>
            <person name="Adams C.Q."/>
            <person name="Ansari-Lari M.A."/>
            <person name="Ayele M."/>
            <person name="Brown M.J."/>
            <person name="Chen G."/>
            <person name="Chen Z."/>
            <person name="Clendenning J."/>
            <person name="Clerc-Blankenburg K.P."/>
            <person name="Chen R."/>
            <person name="Chen Z."/>
            <person name="Davis C."/>
            <person name="Delgado O."/>
            <person name="Dinh H.H."/>
            <person name="Dong W."/>
            <person name="Draper H."/>
            <person name="Ernst S."/>
            <person name="Fu G."/>
            <person name="Gonzalez-Garay M.L."/>
            <person name="Garcia D.K."/>
            <person name="Gillett W."/>
            <person name="Gu J."/>
            <person name="Hao B."/>
            <person name="Haugen E."/>
            <person name="Havlak P."/>
            <person name="He X."/>
            <person name="Hennig S."/>
            <person name="Hu S."/>
            <person name="Huang W."/>
            <person name="Jackson L.R."/>
            <person name="Jacob L.S."/>
            <person name="Kelly S.H."/>
            <person name="Kube M."/>
            <person name="Levy R."/>
            <person name="Li Z."/>
            <person name="Liu B."/>
            <person name="Liu J."/>
            <person name="Liu W."/>
            <person name="Lu J."/>
            <person name="Maheshwari M."/>
            <person name="Nguyen B.-V."/>
            <person name="Okwuonu G.O."/>
            <person name="Palmeiri A."/>
            <person name="Pasternak S."/>
            <person name="Perez L.M."/>
            <person name="Phelps K.A."/>
            <person name="Plopper F.J."/>
            <person name="Qiang B."/>
            <person name="Raymond C."/>
            <person name="Rodriguez R."/>
            <person name="Saenphimmachak C."/>
            <person name="Santibanez J."/>
            <person name="Shen H."/>
            <person name="Shen Y."/>
            <person name="Subramanian S."/>
            <person name="Tabor P.E."/>
            <person name="Verduzco D."/>
            <person name="Waldron L."/>
            <person name="Wang J."/>
            <person name="Wang J."/>
            <person name="Wang Q."/>
            <person name="Williams G.A."/>
            <person name="Wong G.K.-S."/>
            <person name="Yao Z."/>
            <person name="Zhang J."/>
            <person name="Zhang X."/>
            <person name="Zhao G."/>
            <person name="Zhou J."/>
            <person name="Zhou Y."/>
            <person name="Nelson D."/>
            <person name="Lehrach H."/>
            <person name="Reinhardt R."/>
            <person name="Naylor S.L."/>
            <person name="Yang H."/>
            <person name="Olson M."/>
            <person name="Weinstock G."/>
            <person name="Gibbs R.A."/>
        </authorList>
    </citation>
    <scope>NUCLEOTIDE SEQUENCE [LARGE SCALE GENOMIC DNA]</scope>
</reference>
<reference key="5">
    <citation type="submission" date="2005-09" db="EMBL/GenBank/DDBJ databases">
        <authorList>
            <person name="Mural R.J."/>
            <person name="Istrail S."/>
            <person name="Sutton G.G."/>
            <person name="Florea L."/>
            <person name="Halpern A.L."/>
            <person name="Mobarry C.M."/>
            <person name="Lippert R."/>
            <person name="Walenz B."/>
            <person name="Shatkay H."/>
            <person name="Dew I."/>
            <person name="Miller J.R."/>
            <person name="Flanigan M.J."/>
            <person name="Edwards N.J."/>
            <person name="Bolanos R."/>
            <person name="Fasulo D."/>
            <person name="Halldorsson B.V."/>
            <person name="Hannenhalli S."/>
            <person name="Turner R."/>
            <person name="Yooseph S."/>
            <person name="Lu F."/>
            <person name="Nusskern D.R."/>
            <person name="Shue B.C."/>
            <person name="Zheng X.H."/>
            <person name="Zhong F."/>
            <person name="Delcher A.L."/>
            <person name="Huson D.H."/>
            <person name="Kravitz S.A."/>
            <person name="Mouchard L."/>
            <person name="Reinert K."/>
            <person name="Remington K.A."/>
            <person name="Clark A.G."/>
            <person name="Waterman M.S."/>
            <person name="Eichler E.E."/>
            <person name="Adams M.D."/>
            <person name="Hunkapiller M.W."/>
            <person name="Myers E.W."/>
            <person name="Venter J.C."/>
        </authorList>
    </citation>
    <scope>NUCLEOTIDE SEQUENCE [LARGE SCALE GENOMIC DNA]</scope>
</reference>
<reference key="6">
    <citation type="journal article" date="2004" name="Genome Res.">
        <title>The status, quality, and expansion of the NIH full-length cDNA project: the Mammalian Gene Collection (MGC).</title>
        <authorList>
            <consortium name="The MGC Project Team"/>
        </authorList>
    </citation>
    <scope>NUCLEOTIDE SEQUENCE [LARGE SCALE MRNA] (ISOFORM 3)</scope>
    <scope>VARIANTS CYS-416 AND ASN-583</scope>
    <source>
        <tissue>Testis</tissue>
    </source>
</reference>
<reference key="7">
    <citation type="journal article" date="2000" name="DNA Res.">
        <title>Prediction of the coding sequences of unidentified human genes. XVII. The complete sequences of 100 new cDNA clones from brain which code for large proteins in vitro.</title>
        <authorList>
            <person name="Nagase T."/>
            <person name="Kikuno R."/>
            <person name="Ishikawa K."/>
            <person name="Hirosawa M."/>
            <person name="Ohara O."/>
        </authorList>
    </citation>
    <scope>NUCLEOTIDE SEQUENCE [LARGE SCALE MRNA] OF 157-1008 (ISOFORM 1)</scope>
    <source>
        <tissue>Brain</tissue>
    </source>
</reference>
<reference key="8">
    <citation type="journal article" date="2005" name="J. Biol. Chem.">
        <title>The DEXH protein product of the DHX36 gene is the major source of tetramolecular quadruplex G4-DNA resolving activity in HeLa cell lysates.</title>
        <authorList>
            <person name="Vaughn J.P."/>
            <person name="Creacy S.D."/>
            <person name="Routh E.D."/>
            <person name="Joyner-Butt C."/>
            <person name="Jenkins G.S."/>
            <person name="Pauli S."/>
            <person name="Nagamine Y."/>
            <person name="Akman S.A."/>
        </authorList>
    </citation>
    <scope>FUNCTION</scope>
    <scope>CATALYTIC ACTIVITY</scope>
    <scope>COFACTOR</scope>
    <scope>G-QUADRUPLEX DNA-BINDING</scope>
    <scope>IDENTIFICATION BY MASS SPECTROMETRY</scope>
</reference>
<reference key="9">
    <citation type="journal article" date="2007" name="EMBO Rep.">
        <title>Proteomic and functional analysis of Argonaute-containing mRNA-protein complexes in human cells.</title>
        <authorList>
            <person name="Hoeck J."/>
            <person name="Weinmann L."/>
            <person name="Ender C."/>
            <person name="Ruedel S."/>
            <person name="Kremmer E."/>
            <person name="Raabe M."/>
            <person name="Urlaub H."/>
            <person name="Meister G."/>
        </authorList>
    </citation>
    <scope>INTERACTION WITH AGO1 AND AGO2</scope>
</reference>
<reference key="10">
    <citation type="journal article" date="2008" name="Exp. Cell Res.">
        <title>Transcription-dependent nucleolar cap localization and possible nuclear function of DExH RNA helicase RHAU.</title>
        <authorList>
            <person name="Iwamoto F."/>
            <person name="Stadler M."/>
            <person name="Chalupnikova K."/>
            <person name="Oakeley E."/>
            <person name="Nagamine Y."/>
        </authorList>
    </citation>
    <scope>PROBABLE FUNCTION</scope>
    <scope>INTERACTION WITH DDX5; DDX17; HDAC1 AND HDAC3</scope>
    <scope>SUBCELLULAR LOCATION</scope>
    <scope>MUTAGENESIS OF GLU-335</scope>
    <scope>REGION</scope>
</reference>
<reference key="11">
    <citation type="journal article" date="2008" name="J. Biol. Chem.">
        <title>G4 resolvase 1 binds both DNA and RNA tetramolecular quadruplex with high affinity and is the major source of tetramolecular quadruplex G4-DNA and G4-RNA resolving activity in HeLa cell lysates.</title>
        <authorList>
            <person name="Creacy S.D."/>
            <person name="Routh E.D."/>
            <person name="Iwamoto F."/>
            <person name="Nagamine Y."/>
            <person name="Akman S.A."/>
            <person name="Vaughn J.P."/>
        </authorList>
    </citation>
    <scope>FUNCTION</scope>
    <scope>CATALYTIC ACTIVITY</scope>
    <scope>G-QUADRUPLEX DNA-BINDING</scope>
    <scope>G-QUADRUPLEX RNA-BINDING</scope>
</reference>
<reference key="12">
    <citation type="journal article" date="2008" name="J. Biol. Chem.">
        <title>Recruitment of the RNA helicase RHAU to stress granules via a unique RNA-binding domain.</title>
        <authorList>
            <person name="Chalupnikova K."/>
            <person name="Lattmann S."/>
            <person name="Selak N."/>
            <person name="Iwamoto F."/>
            <person name="Fujiki Y."/>
            <person name="Nagamine Y."/>
        </authorList>
    </citation>
    <scope>FUNCTION</scope>
    <scope>RNA-BINDING</scope>
    <scope>SUBCELLULAR LOCATION</scope>
    <scope>MUTAGENESIS OF GLU-335</scope>
    <scope>REGION</scope>
</reference>
<reference key="13">
    <citation type="journal article" date="2008" name="Proc. Natl. Acad. Sci. U.S.A.">
        <title>A quantitative atlas of mitotic phosphorylation.</title>
        <authorList>
            <person name="Dephoure N."/>
            <person name="Zhou C."/>
            <person name="Villen J."/>
            <person name="Beausoleil S.A."/>
            <person name="Bakalarski C.E."/>
            <person name="Elledge S.J."/>
            <person name="Gygi S.P."/>
        </authorList>
    </citation>
    <scope>IDENTIFICATION BY MASS SPECTROMETRY [LARGE SCALE ANALYSIS]</scope>
    <source>
        <tissue>Cervix carcinoma</tissue>
    </source>
</reference>
<reference key="14">
    <citation type="journal article" date="2009" name="Sci. Signal.">
        <title>Quantitative phosphoproteomic analysis of T cell receptor signaling reveals system-wide modulation of protein-protein interactions.</title>
        <authorList>
            <person name="Mayya V."/>
            <person name="Lundgren D.H."/>
            <person name="Hwang S.-I."/>
            <person name="Rezaul K."/>
            <person name="Wu L."/>
            <person name="Eng J.K."/>
            <person name="Rodionov V."/>
            <person name="Han D.K."/>
        </authorList>
    </citation>
    <scope>IDENTIFICATION BY MASS SPECTROMETRY [LARGE SCALE ANALYSIS]</scope>
    <source>
        <tissue>Leukemic T-cell</tissue>
    </source>
</reference>
<reference key="15">
    <citation type="journal article" date="2009" name="Science">
        <title>Lysine acetylation targets protein complexes and co-regulates major cellular functions.</title>
        <authorList>
            <person name="Choudhary C."/>
            <person name="Kumar C."/>
            <person name="Gnad F."/>
            <person name="Nielsen M.L."/>
            <person name="Rehman M."/>
            <person name="Walther T.C."/>
            <person name="Olsen J.V."/>
            <person name="Mann M."/>
        </authorList>
    </citation>
    <scope>ACETYLATION [LARGE SCALE ANALYSIS] AT LYS-947</scope>
    <scope>IDENTIFICATION BY MASS SPECTROMETRY [LARGE SCALE ANALYSIS]</scope>
</reference>
<reference key="16">
    <citation type="journal article" date="2010" name="Nucleic Acids Res.">
        <title>Role of the amino terminal RHAU-specific motif in the recognition and resolution of guanine quadruplex-RNA by the DEAH-box RNA helicase RHAU.</title>
        <authorList>
            <person name="Lattmann S."/>
            <person name="Giri B."/>
            <person name="Vaughn J.P."/>
            <person name="Akman S.A."/>
            <person name="Nagamine Y."/>
        </authorList>
    </citation>
    <scope>FUNCTION</scope>
    <scope>TERC G-QUADRUPLEX RNA-BINDING</scope>
    <scope>SUBCELLULAR LOCATION</scope>
    <scope>REGION DSM MOTIF</scope>
    <scope>MUTAGENESIS OF PRO-54; LEU-57; GLY-59; ILE-62 AND GLY-63</scope>
</reference>
<reference key="17">
    <citation type="journal article" date="2011" name="BMC Syst. Biol.">
        <title>Initial characterization of the human central proteome.</title>
        <authorList>
            <person name="Burkard T.R."/>
            <person name="Planyavsky M."/>
            <person name="Kaupe I."/>
            <person name="Breitwieser F.P."/>
            <person name="Buerckstuemmer T."/>
            <person name="Bennett K.L."/>
            <person name="Superti-Furga G."/>
            <person name="Colinge J."/>
        </authorList>
    </citation>
    <scope>IDENTIFICATION BY MASS SPECTROMETRY [LARGE SCALE ANALYSIS]</scope>
</reference>
<reference key="18">
    <citation type="journal article" date="2011" name="Mol. Cell. Biol.">
        <title>The 5' guanosine tracts of human telomerase RNA are recognized by the G-quadruplex binding domain of the RNA helicase DHX36 and function to increase RNA accumulation.</title>
        <authorList>
            <person name="Sexton A.N."/>
            <person name="Collins K."/>
        </authorList>
    </citation>
    <scope>FUNCTION</scope>
    <scope>TERC G-QUADRUPLEX RNA-BINDING</scope>
    <scope>REGION</scope>
</reference>
<reference key="19">
    <citation type="journal article" date="2011" name="Nucleic Acids Res.">
        <title>G4 resolvase 1 tightly binds and unwinds unimolecular G4-DNA.</title>
        <authorList>
            <person name="Giri B."/>
            <person name="Smaldino P.J."/>
            <person name="Thys R.G."/>
            <person name="Creacy S.D."/>
            <person name="Routh E.D."/>
            <person name="Hantgan R.R."/>
            <person name="Lattmann S."/>
            <person name="Nagamine Y."/>
            <person name="Akman S.A."/>
            <person name="Vaughn J.P."/>
        </authorList>
    </citation>
    <scope>FUNCTION</scope>
    <scope>CATALYTIC ACTIVITY</scope>
    <scope>G-QUADRUPLEX DNA-BINDING</scope>
</reference>
<reference key="20">
    <citation type="journal article" date="2011" name="Nucleic Acids Res.">
        <title>The DEAH-box RNA helicase RHAU binds an intramolecular RNA G-quadruplex in TERC and associates with telomerase holoenzyme.</title>
        <authorList>
            <person name="Lattmann S."/>
            <person name="Stadler M.B."/>
            <person name="Vaughn J.P."/>
            <person name="Akman S.A."/>
            <person name="Nagamine Y."/>
        </authorList>
    </citation>
    <scope>FUNCTION</scope>
    <scope>TERC G-QUADRUPLEX RNA-BINDING</scope>
    <scope>CATALYTIC ACTIVITY</scope>
    <scope>COFACTOR</scope>
    <scope>INTERACTION WITH TERT AND DKC1</scope>
    <scope>REGION</scope>
    <scope>MUTAGENESIS OF GLU-335</scope>
</reference>
<reference key="21">
    <citation type="journal article" date="2012" name="Nucleic Acids Res.">
        <title>Yin Yang 1 contains G-quadruplex structures in its promoter and 5'-UTR and its expression is modulated by G4 resolvase 1.</title>
        <authorList>
            <person name="Huang W."/>
            <person name="Smaldino P.J."/>
            <person name="Zhang Q."/>
            <person name="Miller L.D."/>
            <person name="Cao P."/>
            <person name="Stadelman K."/>
            <person name="Wan M."/>
            <person name="Giri B."/>
            <person name="Lei M."/>
            <person name="Nagamine Y."/>
            <person name="Vaughn J.P."/>
            <person name="Akman S.A."/>
            <person name="Sui G."/>
        </authorList>
    </citation>
    <scope>FUNCTION</scope>
    <scope>G-QUADRUPLEX RNA-BINDING</scope>
</reference>
<reference key="22">
    <citation type="journal article" date="2012" name="Nucleic Acids Res.">
        <title>The RNA helicase RHAU (DHX36) unwinds a G4-quadruplex in human telomerase RNA and promotes the formation of the P1 helix template boundary.</title>
        <authorList>
            <person name="Booy E.P."/>
            <person name="Meier M."/>
            <person name="Okun N."/>
            <person name="Novakowski S.K."/>
            <person name="Xiong S."/>
            <person name="Stetefeld J."/>
            <person name="McKenna S.A."/>
        </authorList>
    </citation>
    <scope>FUNCTION</scope>
    <scope>TERC G-QUADRUPLEX RNA-BINDING</scope>
    <scope>REGION DSM MOTIF</scope>
</reference>
<reference key="23">
    <citation type="journal article" date="2013" name="J. Biol. Chem.">
        <title>Binding of G-quadruplexes to the N-terminal recognition domain of the RNA helicase associated with AU-rich element (RHAU).</title>
        <authorList>
            <person name="Meier M."/>
            <person name="Patel T.R."/>
            <person name="Booy E.P."/>
            <person name="Marushchak O."/>
            <person name="Okun N."/>
            <person name="Deo S."/>
            <person name="Howard R."/>
            <person name="McEleney K."/>
            <person name="Harding S.E."/>
            <person name="Stetefeld J."/>
            <person name="McKenna S.A."/>
        </authorList>
    </citation>
    <scope>TERC G-QUADRUPLEX RNA-BINDING</scope>
    <scope>G-QUADRUPLEX DNA-BINDING</scope>
    <scope>REGION</scope>
</reference>
<reference key="24">
    <citation type="journal article" date="2013" name="J. Proteome Res.">
        <title>Toward a comprehensive characterization of a human cancer cell phosphoproteome.</title>
        <authorList>
            <person name="Zhou H."/>
            <person name="Di Palma S."/>
            <person name="Preisinger C."/>
            <person name="Peng M."/>
            <person name="Polat A.N."/>
            <person name="Heck A.J."/>
            <person name="Mohammed S."/>
        </authorList>
    </citation>
    <scope>PHOSPHORYLATION [LARGE SCALE ANALYSIS] AT SER-161 AND SER-963</scope>
    <scope>IDENTIFICATION BY MASS SPECTROMETRY [LARGE SCALE ANALYSIS]</scope>
    <source>
        <tissue>Erythroleukemia</tissue>
    </source>
</reference>
<reference key="25">
    <citation type="journal article" date="2014" name="Nucleic Acids Res.">
        <title>The RNA helicase RHAU (DHX36) suppresses expression of the transcription factor PITX1.</title>
        <authorList>
            <person name="Booy E.P."/>
            <person name="Howard R."/>
            <person name="Marushchak O."/>
            <person name="Ariyo E.O."/>
            <person name="Meier M."/>
            <person name="Novakowski S.K."/>
            <person name="Deo S.R."/>
            <person name="Dzananovic E."/>
            <person name="Stetefeld J."/>
            <person name="McKenna S.A."/>
        </authorList>
    </citation>
    <scope>FUNCTION</scope>
    <scope>G-QUADRUPLEX RNA-BINDING</scope>
    <scope>RNA-BINDING</scope>
    <scope>REGION DSM MOTIF</scope>
</reference>
<reference key="26">
    <citation type="journal article" date="2015" name="Cell Rep.">
        <title>Post-transcriptional Regulation of Nkx2-5 by RHAU in Heart Development.</title>
        <authorList>
            <person name="Nie J."/>
            <person name="Jiang M."/>
            <person name="Zhang X."/>
            <person name="Tang H."/>
            <person name="Jin H."/>
            <person name="Huang X."/>
            <person name="Yuan B."/>
            <person name="Zhang C."/>
            <person name="Lai J.C."/>
            <person name="Nagamine Y."/>
            <person name="Pan D."/>
            <person name="Wang W."/>
            <person name="Yang Z."/>
        </authorList>
    </citation>
    <scope>FUNCTION</scope>
    <scope>G-QUADRUPLEX RNA-BINDING</scope>
    <scope>AU-RICH RNA-BINDING</scope>
    <scope>INTERACTION WITH ELAVL1</scope>
</reference>
<reference key="27">
    <citation type="journal article" date="2015" name="Methods Mol. Biol.">
        <title>Biochemical characterization of G4 quadruplex telomerase RNA unwinding by the RNA helicase RHAU.</title>
        <authorList>
            <person name="Booy E.P."/>
            <person name="McRae E.K."/>
            <person name="McKenna S.A."/>
        </authorList>
    </citation>
    <scope>FUNCTION</scope>
    <scope>CATALYTIC ACTIVITY</scope>
    <scope>G-QUADRUPLEX RNA-BINDING</scope>
</reference>
<reference key="28">
    <citation type="journal article" date="2015" name="PLoS ONE">
        <title>Identification of Novel Proteins Co-Purifying with Cockayne Syndrome Group B (CSB) Reveals Potential Roles for CSB in RNA Metabolism and Chromatin Dynamics.</title>
        <authorList>
            <person name="Nicolai S."/>
            <person name="Filippi S."/>
            <person name="Caputo M."/>
            <person name="Cipak L."/>
            <person name="Gregan J."/>
            <person name="Ammerer G."/>
            <person name="Frontini M."/>
            <person name="Willems D."/>
            <person name="Prantera G."/>
            <person name="Balajee A.S."/>
            <person name="Proietti-De-Santis L."/>
        </authorList>
    </citation>
    <scope>INTERACTION WITH ERCC6</scope>
</reference>
<reference key="29">
    <citation type="journal article" date="2015" name="PLoS ONE">
        <title>Biophysical Characterization of G-Quadruplex Recognition in the PITX1 mRNA by the Specificity Domain of the Helicase RHAU.</title>
        <authorList>
            <person name="Ariyo E.O."/>
            <person name="Booy E.P."/>
            <person name="Patel T.R."/>
            <person name="Dzananovic E."/>
            <person name="McRae E.K."/>
            <person name="Meier M."/>
            <person name="McEleney K."/>
            <person name="Stetefeld J."/>
            <person name="McKenna S.A."/>
        </authorList>
    </citation>
    <scope>G-QUADRUPLEX RNA-BINDING</scope>
    <scope>G-QUADRUPLEX DNA-BINDING</scope>
    <scope>REGION DSM MOTIF</scope>
</reference>
<reference key="30">
    <citation type="journal article" date="2017" name="J. Mol. Biol.">
        <title>The G-Quadruplex-Specific RNA Helicase DHX36 Regulates p53 Pre-mRNA 3'-End Processing Following UV-Induced DNA Damage.</title>
        <authorList>
            <person name="Newman M."/>
            <person name="Sfaxi R."/>
            <person name="Saha A."/>
            <person name="Monchaud D."/>
            <person name="Teulade-Fichou M.P."/>
            <person name="Vagner S."/>
        </authorList>
    </citation>
    <scope>FUNCTION</scope>
    <scope>G-QUADRUPLEX RNA-BINDING</scope>
</reference>
<reference evidence="36 37" key="31">
    <citation type="journal article" date="2015" name="Proc. Natl. Acad. Sci. U.S.A.">
        <title>Insights into G-quadruplex specific recognition by the DEAH-box helicase RHAU: Solution structure of a peptide-quadruplex complex.</title>
        <authorList>
            <person name="Heddi B."/>
            <person name="Cheong V.V."/>
            <person name="Martadinata H."/>
            <person name="Phan A.T."/>
        </authorList>
    </citation>
    <scope>STRUCTURE BY NMR OF 53-70 IN COMPLEX WITH G-QUADRUPLEX DNA</scope>
    <scope>FUNCTION</scope>
    <scope>G-QUADRUPLEX DNA-BINDING</scope>
    <scope>G-QUADRUPLEX RNA-BINDING</scope>
    <scope>REGION DSM MOTIF</scope>
    <scope>MUTAGENESIS OF GLY-55; GLY-59; GLY-63; TRP-65 AND TYR-66</scope>
</reference>
<sequence length="1008" mass="114760">MSYDYHQNWGRDGGPRSSGGGYGGGPAGGHGGNRGSGGGGGGGGGGRGGRGRHPGHLKGREIGMWYAKKQGQKNKEAERQERAVVHMDERREEQIVQLLNSVQAKNDKESEAQISWFAPEDHGYGTEVSTKNTPCSENKLDIQEKKLINQEKKMFRIRNRSYIDRDSEYLLQENEPDGTLDQKLLEDLQKKKNDLRYIEMQHFREKLPSYGMQKELVNLIDNHQVTVISGETGCGKTTQVTQFILDNYIERGKGSACRIVCTQPRRISAISVAERVAAERAESCGSGNSTGYQIRLQSRLPRKQGSILYCTTGIILQWLQSDPYLSSVSHIVLDEIHERNLQSDVLMTVVKDLLNFRSDLKVILMSATLNAEKFSEYFGNCPMIHIPGFTFPVVEYLLEDVIEKIRYVPEQKEHRSQFKRGFMQGHVNRQEKEEKEAIYKERWPDYVRELRRRYSASTVDVIEMMEDDKVDLNLIVALIRYIVLEEEDGAILVFLPGWDNISTLHDLLMSQVMFKSDKFLIIPLHSLMPTVNQTQVFKRTPPGVRKIVIATNIAETSITIDDVVYVIDGGKIKETHFDTQNNISTMSAEWVSKANAKQRKGRAGRVQPGHCYHLYNGLRASLLDDYQLPEILRTPLEELCLQIKILRLGGIAYFLSRLMDPPSNEAVLLSIRHLMELNALDKQEELTPLGVHLARLPVEPHIGKMILFGALFCCLDPVLTIAASLSFKDPFVIPLGKEKIADARRKELAKDTRSDHLTVVNAFEGWEEARRRGFRYEKDYCWEYFLSSNTLQMLHNMKGQFAEHLLGAGFVSSRNPKDPESNINSDNEKIIKAVICAGLYPKVAKIRLNLGKKRKMVKVYTKTDGLVAVHPKSVNVEQTDFHYNWLIYHLKMRTSSIYLYDCTEVSPYCLLFFGGDISIQKDNDQETIAVDEWIVFQSPARIAHLVKELRKELDILLQEKIESPHPVDWNDTKSRDCAVLSAIIDLIKTQEKATPRNFPPRFQDGYYS</sequence>
<dbReference type="EC" id="3.6.4.12" evidence="11 14 18"/>
<dbReference type="EC" id="3.6.4.13" evidence="14 19 24"/>
<dbReference type="EMBL" id="AF217190">
    <property type="protein sequence ID" value="AAG36783.1"/>
    <property type="molecule type" value="mRNA"/>
</dbReference>
<dbReference type="EMBL" id="AJ577133">
    <property type="protein sequence ID" value="CAE11802.1"/>
    <property type="molecule type" value="mRNA"/>
</dbReference>
<dbReference type="EMBL" id="AJ577134">
    <property type="protein sequence ID" value="CAE11803.1"/>
    <property type="molecule type" value="mRNA"/>
</dbReference>
<dbReference type="EMBL" id="AK314435">
    <property type="protein sequence ID" value="BAG37047.1"/>
    <property type="molecule type" value="mRNA"/>
</dbReference>
<dbReference type="EMBL" id="AC018452">
    <property type="status" value="NOT_ANNOTATED_CDS"/>
    <property type="molecule type" value="Genomic_DNA"/>
</dbReference>
<dbReference type="EMBL" id="AC134026">
    <property type="status" value="NOT_ANNOTATED_CDS"/>
    <property type="molecule type" value="Genomic_DNA"/>
</dbReference>
<dbReference type="EMBL" id="CH471052">
    <property type="protein sequence ID" value="EAW78761.1"/>
    <property type="molecule type" value="Genomic_DNA"/>
</dbReference>
<dbReference type="EMBL" id="BC036035">
    <property type="protein sequence ID" value="AAH36035.1"/>
    <property type="molecule type" value="mRNA"/>
</dbReference>
<dbReference type="EMBL" id="AB040921">
    <property type="protein sequence ID" value="BAA96012.1"/>
    <property type="molecule type" value="mRNA"/>
</dbReference>
<dbReference type="CCDS" id="CCDS3171.1">
    <molecule id="Q9H2U1-1"/>
</dbReference>
<dbReference type="CCDS" id="CCDS54657.1">
    <molecule id="Q9H2U1-2"/>
</dbReference>
<dbReference type="PIR" id="D56236">
    <property type="entry name" value="D56236"/>
</dbReference>
<dbReference type="RefSeq" id="NP_001107869.1">
    <molecule id="Q9H2U1-2"/>
    <property type="nucleotide sequence ID" value="NM_001114397.2"/>
</dbReference>
<dbReference type="RefSeq" id="NP_065916.2">
    <molecule id="Q9H2U1-1"/>
    <property type="nucleotide sequence ID" value="NM_020865.3"/>
</dbReference>
<dbReference type="PDB" id="2N16">
    <property type="method" value="NMR"/>
    <property type="chains" value="A=53-70"/>
</dbReference>
<dbReference type="PDB" id="2N21">
    <property type="method" value="NMR"/>
    <property type="chains" value="A=53-70"/>
</dbReference>
<dbReference type="PDB" id="6Q6R">
    <property type="method" value="X-ray"/>
    <property type="resolution" value="1.50 A"/>
    <property type="chains" value="E/F/G/H=53-81"/>
</dbReference>
<dbReference type="PDBsum" id="2N16"/>
<dbReference type="PDBsum" id="2N21"/>
<dbReference type="PDBsum" id="6Q6R"/>
<dbReference type="SMR" id="Q9H2U1"/>
<dbReference type="BioGRID" id="128022">
    <property type="interactions" value="331"/>
</dbReference>
<dbReference type="FunCoup" id="Q9H2U1">
    <property type="interactions" value="3470"/>
</dbReference>
<dbReference type="IntAct" id="Q9H2U1">
    <property type="interactions" value="125"/>
</dbReference>
<dbReference type="MINT" id="Q9H2U1"/>
<dbReference type="STRING" id="9606.ENSP00000417078"/>
<dbReference type="ChEMBL" id="CHEMBL2040704"/>
<dbReference type="GlyGen" id="Q9H2U1">
    <property type="glycosylation" value="2 sites, 1 N-linked glycan (1 site), 1 O-linked glycan (1 site)"/>
</dbReference>
<dbReference type="iPTMnet" id="Q9H2U1"/>
<dbReference type="MetOSite" id="Q9H2U1"/>
<dbReference type="PhosphoSitePlus" id="Q9H2U1"/>
<dbReference type="SwissPalm" id="Q9H2U1"/>
<dbReference type="BioMuta" id="DHX36"/>
<dbReference type="DMDM" id="313104099"/>
<dbReference type="jPOST" id="Q9H2U1"/>
<dbReference type="MassIVE" id="Q9H2U1"/>
<dbReference type="PaxDb" id="9606-ENSP00000417078"/>
<dbReference type="PeptideAtlas" id="Q9H2U1"/>
<dbReference type="ProteomicsDB" id="80591">
    <molecule id="Q9H2U1-1"/>
</dbReference>
<dbReference type="ProteomicsDB" id="80592">
    <molecule id="Q9H2U1-2"/>
</dbReference>
<dbReference type="ProteomicsDB" id="80593">
    <molecule id="Q9H2U1-3"/>
</dbReference>
<dbReference type="Pumba" id="Q9H2U1"/>
<dbReference type="Antibodypedia" id="33625">
    <property type="antibodies" value="173 antibodies from 27 providers"/>
</dbReference>
<dbReference type="DNASU" id="170506"/>
<dbReference type="Ensembl" id="ENST00000308361.10">
    <molecule id="Q9H2U1-3"/>
    <property type="protein sequence ID" value="ENSP00000309296.6"/>
    <property type="gene ID" value="ENSG00000174953.14"/>
</dbReference>
<dbReference type="Ensembl" id="ENST00000329463.9">
    <molecule id="Q9H2U1-2"/>
    <property type="protein sequence ID" value="ENSP00000330113.5"/>
    <property type="gene ID" value="ENSG00000174953.14"/>
</dbReference>
<dbReference type="Ensembl" id="ENST00000496811.6">
    <molecule id="Q9H2U1-1"/>
    <property type="protein sequence ID" value="ENSP00000417078.1"/>
    <property type="gene ID" value="ENSG00000174953.14"/>
</dbReference>
<dbReference type="GeneID" id="170506"/>
<dbReference type="KEGG" id="hsa:170506"/>
<dbReference type="MANE-Select" id="ENST00000496811.6">
    <property type="protein sequence ID" value="ENSP00000417078.1"/>
    <property type="RefSeq nucleotide sequence ID" value="NM_020865.3"/>
    <property type="RefSeq protein sequence ID" value="NP_065916.2"/>
</dbReference>
<dbReference type="UCSC" id="uc003ezy.5">
    <molecule id="Q9H2U1-1"/>
    <property type="organism name" value="human"/>
</dbReference>
<dbReference type="AGR" id="HGNC:14410"/>
<dbReference type="CTD" id="170506"/>
<dbReference type="DisGeNET" id="170506"/>
<dbReference type="GeneCards" id="DHX36"/>
<dbReference type="HGNC" id="HGNC:14410">
    <property type="gene designation" value="DHX36"/>
</dbReference>
<dbReference type="HPA" id="ENSG00000174953">
    <property type="expression patterns" value="Low tissue specificity"/>
</dbReference>
<dbReference type="MIM" id="612767">
    <property type="type" value="gene"/>
</dbReference>
<dbReference type="neXtProt" id="NX_Q9H2U1"/>
<dbReference type="OpenTargets" id="ENSG00000174953"/>
<dbReference type="PharmGKB" id="PA27223"/>
<dbReference type="VEuPathDB" id="HostDB:ENSG00000174953"/>
<dbReference type="eggNOG" id="KOG0920">
    <property type="taxonomic scope" value="Eukaryota"/>
</dbReference>
<dbReference type="GeneTree" id="ENSGT00940000156903"/>
<dbReference type="InParanoid" id="Q9H2U1"/>
<dbReference type="OMA" id="WLQSDKH"/>
<dbReference type="OrthoDB" id="5600252at2759"/>
<dbReference type="PAN-GO" id="Q9H2U1">
    <property type="GO annotations" value="5 GO annotations based on evolutionary models"/>
</dbReference>
<dbReference type="PhylomeDB" id="Q9H2U1"/>
<dbReference type="TreeFam" id="TF324744"/>
<dbReference type="PathwayCommons" id="Q9H2U1"/>
<dbReference type="Reactome" id="R-HSA-3134963">
    <property type="pathway name" value="DEx/H-box helicases activate type I IFN and inflammatory cytokines production"/>
</dbReference>
<dbReference type="SignaLink" id="Q9H2U1"/>
<dbReference type="SIGNOR" id="Q9H2U1"/>
<dbReference type="BioGRID-ORCS" id="170506">
    <property type="hits" value="643 hits in 1191 CRISPR screens"/>
</dbReference>
<dbReference type="CD-CODE" id="232F8A39">
    <property type="entry name" value="P-body"/>
</dbReference>
<dbReference type="CD-CODE" id="804901D1">
    <property type="entry name" value="Nuclear speckle"/>
</dbReference>
<dbReference type="CD-CODE" id="91857CE7">
    <property type="entry name" value="Nucleolus"/>
</dbReference>
<dbReference type="CD-CODE" id="DEE660B4">
    <property type="entry name" value="Stress granule"/>
</dbReference>
<dbReference type="ChiTaRS" id="DHX36">
    <property type="organism name" value="human"/>
</dbReference>
<dbReference type="EvolutionaryTrace" id="Q9H2U1"/>
<dbReference type="GeneWiki" id="DHX36"/>
<dbReference type="GenomeRNAi" id="170506"/>
<dbReference type="Pharos" id="Q9H2U1">
    <property type="development level" value="Tbio"/>
</dbReference>
<dbReference type="PRO" id="PR:Q9H2U1"/>
<dbReference type="Proteomes" id="UP000005640">
    <property type="component" value="Chromosome 3"/>
</dbReference>
<dbReference type="RNAct" id="Q9H2U1">
    <property type="molecule type" value="protein"/>
</dbReference>
<dbReference type="Bgee" id="ENSG00000174953">
    <property type="expression patterns" value="Expressed in sperm and 194 other cell types or tissues"/>
</dbReference>
<dbReference type="ExpressionAtlas" id="Q9H2U1">
    <property type="expression patterns" value="baseline and differential"/>
</dbReference>
<dbReference type="GO" id="GO:0030424">
    <property type="term" value="C:axon"/>
    <property type="evidence" value="ECO:0000250"/>
    <property type="project" value="UniProtKB"/>
</dbReference>
<dbReference type="GO" id="GO:0000781">
    <property type="term" value="C:chromosome, telomeric region"/>
    <property type="evidence" value="ECO:0000314"/>
    <property type="project" value="UniProtKB"/>
</dbReference>
<dbReference type="GO" id="GO:0005737">
    <property type="term" value="C:cytoplasm"/>
    <property type="evidence" value="ECO:0000314"/>
    <property type="project" value="UniProtKB"/>
</dbReference>
<dbReference type="GO" id="GO:0010494">
    <property type="term" value="C:cytoplasmic stress granule"/>
    <property type="evidence" value="ECO:0000314"/>
    <property type="project" value="UniProtKB"/>
</dbReference>
<dbReference type="GO" id="GO:0005829">
    <property type="term" value="C:cytosol"/>
    <property type="evidence" value="ECO:0000314"/>
    <property type="project" value="HPA"/>
</dbReference>
<dbReference type="GO" id="GO:0030425">
    <property type="term" value="C:dendrite"/>
    <property type="evidence" value="ECO:0000250"/>
    <property type="project" value="UniProtKB"/>
</dbReference>
<dbReference type="GO" id="GO:0070062">
    <property type="term" value="C:extracellular exosome"/>
    <property type="evidence" value="ECO:0007005"/>
    <property type="project" value="UniProtKB"/>
</dbReference>
<dbReference type="GO" id="GO:0005739">
    <property type="term" value="C:mitochondrion"/>
    <property type="evidence" value="ECO:0007669"/>
    <property type="project" value="UniProtKB-SubCell"/>
</dbReference>
<dbReference type="GO" id="GO:0016607">
    <property type="term" value="C:nuclear speck"/>
    <property type="evidence" value="ECO:0000314"/>
    <property type="project" value="UniProtKB"/>
</dbReference>
<dbReference type="GO" id="GO:0005654">
    <property type="term" value="C:nucleoplasm"/>
    <property type="evidence" value="ECO:0000314"/>
    <property type="project" value="HPA"/>
</dbReference>
<dbReference type="GO" id="GO:0005634">
    <property type="term" value="C:nucleus"/>
    <property type="evidence" value="ECO:0000314"/>
    <property type="project" value="UniProtKB"/>
</dbReference>
<dbReference type="GO" id="GO:0043204">
    <property type="term" value="C:perikaryon"/>
    <property type="evidence" value="ECO:0000250"/>
    <property type="project" value="UniProtKB"/>
</dbReference>
<dbReference type="GO" id="GO:0005524">
    <property type="term" value="F:ATP binding"/>
    <property type="evidence" value="ECO:0000250"/>
    <property type="project" value="UniProtKB"/>
</dbReference>
<dbReference type="GO" id="GO:0016887">
    <property type="term" value="F:ATP hydrolysis activity"/>
    <property type="evidence" value="ECO:0007669"/>
    <property type="project" value="RHEA"/>
</dbReference>
<dbReference type="GO" id="GO:0008094">
    <property type="term" value="F:ATP-dependent activity, acting on DNA"/>
    <property type="evidence" value="ECO:0000314"/>
    <property type="project" value="UniProtKB"/>
</dbReference>
<dbReference type="GO" id="GO:0140640">
    <property type="term" value="F:catalytic activity, acting on a nucleic acid"/>
    <property type="evidence" value="ECO:0000314"/>
    <property type="project" value="UniProtKB"/>
</dbReference>
<dbReference type="GO" id="GO:0003678">
    <property type="term" value="F:DNA helicase activity"/>
    <property type="evidence" value="ECO:0000314"/>
    <property type="project" value="UniProtKB"/>
</dbReference>
<dbReference type="GO" id="GO:0003725">
    <property type="term" value="F:double-stranded RNA binding"/>
    <property type="evidence" value="ECO:0000314"/>
    <property type="project" value="MGI"/>
</dbReference>
<dbReference type="GO" id="GO:0051880">
    <property type="term" value="F:G-quadruplex DNA binding"/>
    <property type="evidence" value="ECO:0000314"/>
    <property type="project" value="UniProtKB"/>
</dbReference>
<dbReference type="GO" id="GO:0002151">
    <property type="term" value="F:G-quadruplex RNA binding"/>
    <property type="evidence" value="ECO:0000314"/>
    <property type="project" value="UniProtKB"/>
</dbReference>
<dbReference type="GO" id="GO:0042826">
    <property type="term" value="F:histone deacetylase binding"/>
    <property type="evidence" value="ECO:0000250"/>
    <property type="project" value="UniProtKB"/>
</dbReference>
<dbReference type="GO" id="GO:0000287">
    <property type="term" value="F:magnesium ion binding"/>
    <property type="evidence" value="ECO:0000314"/>
    <property type="project" value="UniProtKB"/>
</dbReference>
<dbReference type="GO" id="GO:0035925">
    <property type="term" value="F:mRNA 3'-UTR AU-rich region binding"/>
    <property type="evidence" value="ECO:0000314"/>
    <property type="project" value="UniProtKB"/>
</dbReference>
<dbReference type="GO" id="GO:0003730">
    <property type="term" value="F:mRNA 3'-UTR binding"/>
    <property type="evidence" value="ECO:0000314"/>
    <property type="project" value="UniProtKB"/>
</dbReference>
<dbReference type="GO" id="GO:0048027">
    <property type="term" value="F:mRNA 5'-UTR binding"/>
    <property type="evidence" value="ECO:0000314"/>
    <property type="project" value="UniProtKB"/>
</dbReference>
<dbReference type="GO" id="GO:0070883">
    <property type="term" value="F:pre-miRNA binding"/>
    <property type="evidence" value="ECO:0000250"/>
    <property type="project" value="UniProtKB"/>
</dbReference>
<dbReference type="GO" id="GO:0003723">
    <property type="term" value="F:RNA binding"/>
    <property type="evidence" value="ECO:0000314"/>
    <property type="project" value="UniProtKB"/>
</dbReference>
<dbReference type="GO" id="GO:0003724">
    <property type="term" value="F:RNA helicase activity"/>
    <property type="evidence" value="ECO:0000314"/>
    <property type="project" value="UniProtKB"/>
</dbReference>
<dbReference type="GO" id="GO:0000978">
    <property type="term" value="F:RNA polymerase II cis-regulatory region sequence-specific DNA binding"/>
    <property type="evidence" value="ECO:0000314"/>
    <property type="project" value="UniProtKB"/>
</dbReference>
<dbReference type="GO" id="GO:0003697">
    <property type="term" value="F:single-stranded DNA binding"/>
    <property type="evidence" value="ECO:0000314"/>
    <property type="project" value="UniProtKB"/>
</dbReference>
<dbReference type="GO" id="GO:0070034">
    <property type="term" value="F:telomerase RNA binding"/>
    <property type="evidence" value="ECO:0000314"/>
    <property type="project" value="UniProtKB"/>
</dbReference>
<dbReference type="GO" id="GO:0000976">
    <property type="term" value="F:transcription cis-regulatory region binding"/>
    <property type="evidence" value="ECO:0000250"/>
    <property type="project" value="UniProtKB"/>
</dbReference>
<dbReference type="GO" id="GO:0061158">
    <property type="term" value="P:3'-UTR-mediated mRNA destabilization"/>
    <property type="evidence" value="ECO:0000315"/>
    <property type="project" value="UniProtKB"/>
</dbReference>
<dbReference type="GO" id="GO:0030154">
    <property type="term" value="P:cell differentiation"/>
    <property type="evidence" value="ECO:0007669"/>
    <property type="project" value="UniProtKB-KW"/>
</dbReference>
<dbReference type="GO" id="GO:1903843">
    <property type="term" value="P:cellular response to arsenite ion"/>
    <property type="evidence" value="ECO:0000314"/>
    <property type="project" value="UniProtKB"/>
</dbReference>
<dbReference type="GO" id="GO:0034605">
    <property type="term" value="P:cellular response to heat"/>
    <property type="evidence" value="ECO:0000314"/>
    <property type="project" value="UniProtKB"/>
</dbReference>
<dbReference type="GO" id="GO:0034644">
    <property type="term" value="P:cellular response to UV"/>
    <property type="evidence" value="ECO:0000315"/>
    <property type="project" value="UniProtKB"/>
</dbReference>
<dbReference type="GO" id="GO:0051607">
    <property type="term" value="P:defense response to virus"/>
    <property type="evidence" value="ECO:0007669"/>
    <property type="project" value="UniProtKB-KW"/>
</dbReference>
<dbReference type="GO" id="GO:0045087">
    <property type="term" value="P:innate immune response"/>
    <property type="evidence" value="ECO:0007669"/>
    <property type="project" value="UniProtKB-KW"/>
</dbReference>
<dbReference type="GO" id="GO:0017148">
    <property type="term" value="P:negative regulation of translation"/>
    <property type="evidence" value="ECO:0000314"/>
    <property type="project" value="UniProtKB"/>
</dbReference>
<dbReference type="GO" id="GO:0001503">
    <property type="term" value="P:ossification"/>
    <property type="evidence" value="ECO:0000250"/>
    <property type="project" value="UniProtKB"/>
</dbReference>
<dbReference type="GO" id="GO:0043123">
    <property type="term" value="P:positive regulation of canonical NF-kappaB signal transduction"/>
    <property type="evidence" value="ECO:0000250"/>
    <property type="project" value="UniProtKB"/>
</dbReference>
<dbReference type="GO" id="GO:0051891">
    <property type="term" value="P:positive regulation of cardioblast differentiation"/>
    <property type="evidence" value="ECO:0000250"/>
    <property type="project" value="UniProtKB"/>
</dbReference>
<dbReference type="GO" id="GO:2000767">
    <property type="term" value="P:positive regulation of cytoplasmic translation"/>
    <property type="evidence" value="ECO:0000315"/>
    <property type="project" value="UniProtKB"/>
</dbReference>
<dbReference type="GO" id="GO:0061003">
    <property type="term" value="P:positive regulation of dendritic spine morphogenesis"/>
    <property type="evidence" value="ECO:0000250"/>
    <property type="project" value="UniProtKB"/>
</dbReference>
<dbReference type="GO" id="GO:0010628">
    <property type="term" value="P:positive regulation of gene expression"/>
    <property type="evidence" value="ECO:0000250"/>
    <property type="project" value="UniProtKB"/>
</dbReference>
<dbReference type="GO" id="GO:1901534">
    <property type="term" value="P:positive regulation of hematopoietic progenitor cell differentiation"/>
    <property type="evidence" value="ECO:0000250"/>
    <property type="project" value="UniProtKB"/>
</dbReference>
<dbReference type="GO" id="GO:0032727">
    <property type="term" value="P:positive regulation of interferon-alpha production"/>
    <property type="evidence" value="ECO:0000315"/>
    <property type="project" value="UniProtKB"/>
</dbReference>
<dbReference type="GO" id="GO:1904582">
    <property type="term" value="P:positive regulation of intracellular mRNA localization"/>
    <property type="evidence" value="ECO:0000250"/>
    <property type="project" value="UniProtKB"/>
</dbReference>
<dbReference type="GO" id="GO:0031442">
    <property type="term" value="P:positive regulation of mRNA 3'-end processing"/>
    <property type="evidence" value="ECO:0000315"/>
    <property type="project" value="UniProtKB"/>
</dbReference>
<dbReference type="GO" id="GO:0002735">
    <property type="term" value="P:positive regulation of myeloid dendritic cell cytokine production"/>
    <property type="evidence" value="ECO:0007669"/>
    <property type="project" value="Ensembl"/>
</dbReference>
<dbReference type="GO" id="GO:1900153">
    <property type="term" value="P:positive regulation of nuclear-transcribed mRNA catabolic process, deadenylation-dependent decay"/>
    <property type="evidence" value="ECO:0000315"/>
    <property type="project" value="UniProtKB"/>
</dbReference>
<dbReference type="GO" id="GO:0032206">
    <property type="term" value="P:positive regulation of telomere maintenance"/>
    <property type="evidence" value="ECO:0000315"/>
    <property type="project" value="UniProtKB"/>
</dbReference>
<dbReference type="GO" id="GO:1904358">
    <property type="term" value="P:positive regulation of telomere maintenance via telomere lengthening"/>
    <property type="evidence" value="ECO:0000315"/>
    <property type="project" value="UniProtKB"/>
</dbReference>
<dbReference type="GO" id="GO:0045944">
    <property type="term" value="P:positive regulation of transcription by RNA polymerase II"/>
    <property type="evidence" value="ECO:0000250"/>
    <property type="project" value="UniProtKB"/>
</dbReference>
<dbReference type="GO" id="GO:0060261">
    <property type="term" value="P:positive regulation of transcription initiation by RNA polymerase II"/>
    <property type="evidence" value="ECO:0000315"/>
    <property type="project" value="UniProtKB"/>
</dbReference>
<dbReference type="GO" id="GO:0045995">
    <property type="term" value="P:regulation of embryonic development"/>
    <property type="evidence" value="ECO:0000250"/>
    <property type="project" value="UniProtKB"/>
</dbReference>
<dbReference type="GO" id="GO:0043488">
    <property type="term" value="P:regulation of mRNA stability"/>
    <property type="evidence" value="ECO:0000315"/>
    <property type="project" value="UniProtKB"/>
</dbReference>
<dbReference type="GO" id="GO:0006359">
    <property type="term" value="P:regulation of transcription by RNA polymerase III"/>
    <property type="evidence" value="ECO:0000315"/>
    <property type="project" value="UniProtKB"/>
</dbReference>
<dbReference type="GO" id="GO:0043330">
    <property type="term" value="P:response to exogenous dsRNA"/>
    <property type="evidence" value="ECO:0007669"/>
    <property type="project" value="Ensembl"/>
</dbReference>
<dbReference type="GO" id="GO:0007283">
    <property type="term" value="P:spermatogenesis"/>
    <property type="evidence" value="ECO:0000250"/>
    <property type="project" value="UniProtKB"/>
</dbReference>
<dbReference type="GO" id="GO:0090669">
    <property type="term" value="P:telomerase RNA stabilization"/>
    <property type="evidence" value="ECO:0000314"/>
    <property type="project" value="BHF-UCL"/>
</dbReference>
<dbReference type="CDD" id="cd17981">
    <property type="entry name" value="DEXHc_DHX36"/>
    <property type="match status" value="1"/>
</dbReference>
<dbReference type="CDD" id="cd18791">
    <property type="entry name" value="SF2_C_RHA"/>
    <property type="match status" value="1"/>
</dbReference>
<dbReference type="FunFam" id="1.20.120.1080:FF:000002">
    <property type="entry name" value="Putative ATP-dependent RNA helicase DHX36"/>
    <property type="match status" value="1"/>
</dbReference>
<dbReference type="FunFam" id="3.40.50.300:FF:000670">
    <property type="entry name" value="Putative ATP-dependent RNA helicase DHX36"/>
    <property type="match status" value="1"/>
</dbReference>
<dbReference type="FunFam" id="3.40.50.300:FF:000739">
    <property type="entry name" value="Putative ATP-dependent RNA helicase DHX36"/>
    <property type="match status" value="1"/>
</dbReference>
<dbReference type="Gene3D" id="1.20.120.1080">
    <property type="match status" value="1"/>
</dbReference>
<dbReference type="Gene3D" id="3.40.50.300">
    <property type="entry name" value="P-loop containing nucleotide triphosphate hydrolases"/>
    <property type="match status" value="2"/>
</dbReference>
<dbReference type="InterPro" id="IPR011709">
    <property type="entry name" value="DEAD-box_helicase_OB_fold"/>
</dbReference>
<dbReference type="InterPro" id="IPR011545">
    <property type="entry name" value="DEAD/DEAH_box_helicase_dom"/>
</dbReference>
<dbReference type="InterPro" id="IPR002464">
    <property type="entry name" value="DNA/RNA_helicase_DEAH_CS"/>
</dbReference>
<dbReference type="InterPro" id="IPR048333">
    <property type="entry name" value="HA2_WH"/>
</dbReference>
<dbReference type="InterPro" id="IPR007502">
    <property type="entry name" value="Helicase-assoc_dom"/>
</dbReference>
<dbReference type="InterPro" id="IPR014001">
    <property type="entry name" value="Helicase_ATP-bd"/>
</dbReference>
<dbReference type="InterPro" id="IPR001650">
    <property type="entry name" value="Helicase_C-like"/>
</dbReference>
<dbReference type="InterPro" id="IPR027417">
    <property type="entry name" value="P-loop_NTPase"/>
</dbReference>
<dbReference type="PANTHER" id="PTHR18934:SF237">
    <property type="entry name" value="ATP-DEPENDENT DNA_RNA HELICASE DHX36"/>
    <property type="match status" value="1"/>
</dbReference>
<dbReference type="PANTHER" id="PTHR18934">
    <property type="entry name" value="ATP-DEPENDENT RNA HELICASE"/>
    <property type="match status" value="1"/>
</dbReference>
<dbReference type="Pfam" id="PF00270">
    <property type="entry name" value="DEAD"/>
    <property type="match status" value="1"/>
</dbReference>
<dbReference type="Pfam" id="PF21010">
    <property type="entry name" value="HA2_C"/>
    <property type="match status" value="1"/>
</dbReference>
<dbReference type="Pfam" id="PF04408">
    <property type="entry name" value="HA2_N"/>
    <property type="match status" value="1"/>
</dbReference>
<dbReference type="Pfam" id="PF00271">
    <property type="entry name" value="Helicase_C"/>
    <property type="match status" value="1"/>
</dbReference>
<dbReference type="Pfam" id="PF07717">
    <property type="entry name" value="OB_NTP_bind"/>
    <property type="match status" value="1"/>
</dbReference>
<dbReference type="SMART" id="SM00487">
    <property type="entry name" value="DEXDc"/>
    <property type="match status" value="1"/>
</dbReference>
<dbReference type="SMART" id="SM00847">
    <property type="entry name" value="HA2"/>
    <property type="match status" value="1"/>
</dbReference>
<dbReference type="SMART" id="SM00490">
    <property type="entry name" value="HELICc"/>
    <property type="match status" value="1"/>
</dbReference>
<dbReference type="SUPFAM" id="SSF52540">
    <property type="entry name" value="P-loop containing nucleoside triphosphate hydrolases"/>
    <property type="match status" value="1"/>
</dbReference>
<dbReference type="PROSITE" id="PS00690">
    <property type="entry name" value="DEAH_ATP_HELICASE"/>
    <property type="match status" value="1"/>
</dbReference>
<dbReference type="PROSITE" id="PS51192">
    <property type="entry name" value="HELICASE_ATP_BIND_1"/>
    <property type="match status" value="1"/>
</dbReference>
<dbReference type="PROSITE" id="PS51194">
    <property type="entry name" value="HELICASE_CTER"/>
    <property type="match status" value="1"/>
</dbReference>
<protein>
    <recommendedName>
        <fullName evidence="34">ATP-dependent DNA/RNA helicase DHX36</fullName>
        <ecNumber evidence="11 14 18">3.6.4.12</ecNumber>
        <ecNumber evidence="14 19 24">3.6.4.13</ecNumber>
    </recommendedName>
    <alternativeName>
        <fullName evidence="30">DEAD/H box polypeptide 36</fullName>
    </alternativeName>
    <alternativeName>
        <fullName evidence="34">DEAH-box protein 36</fullName>
    </alternativeName>
    <alternativeName>
        <fullName evidence="33">G4-resolvase-1</fullName>
        <shortName evidence="33">G4R1</shortName>
    </alternativeName>
    <alternativeName>
        <fullName evidence="31">MLE-like protein 1</fullName>
    </alternativeName>
    <alternativeName>
        <fullName evidence="31">RNA helicase associated with AU-rich element protein</fullName>
    </alternativeName>
</protein>
<keyword id="KW-0002">3D-structure</keyword>
<keyword id="KW-0007">Acetylation</keyword>
<keyword id="KW-0010">Activator</keyword>
<keyword id="KW-0025">Alternative splicing</keyword>
<keyword id="KW-0051">Antiviral defense</keyword>
<keyword id="KW-0067">ATP-binding</keyword>
<keyword id="KW-0966">Cell projection</keyword>
<keyword id="KW-0158">Chromosome</keyword>
<keyword id="KW-0175">Coiled coil</keyword>
<keyword id="KW-0963">Cytoplasm</keyword>
<keyword id="KW-0217">Developmental protein</keyword>
<keyword id="KW-0221">Differentiation</keyword>
<keyword id="KW-0238">DNA-binding</keyword>
<keyword id="KW-0347">Helicase</keyword>
<keyword id="KW-0378">Hydrolase</keyword>
<keyword id="KW-0391">Immunity</keyword>
<keyword id="KW-0399">Innate immunity</keyword>
<keyword id="KW-0460">Magnesium</keyword>
<keyword id="KW-0479">Metal-binding</keyword>
<keyword id="KW-0496">Mitochondrion</keyword>
<keyword id="KW-0547">Nucleotide-binding</keyword>
<keyword id="KW-0539">Nucleus</keyword>
<keyword id="KW-0597">Phosphoprotein</keyword>
<keyword id="KW-1267">Proteomics identification</keyword>
<keyword id="KW-1185">Reference proteome</keyword>
<keyword id="KW-0677">Repeat</keyword>
<keyword id="KW-0678">Repressor</keyword>
<keyword id="KW-0694">RNA-binding</keyword>
<keyword id="KW-0779">Telomere</keyword>
<keyword id="KW-0804">Transcription</keyword>
<keyword id="KW-0805">Transcription regulation</keyword>
<keyword id="KW-0810">Translation regulation</keyword>
<keyword id="KW-0813">Transport</keyword>
<organism>
    <name type="scientific">Homo sapiens</name>
    <name type="common">Human</name>
    <dbReference type="NCBI Taxonomy" id="9606"/>
    <lineage>
        <taxon>Eukaryota</taxon>
        <taxon>Metazoa</taxon>
        <taxon>Chordata</taxon>
        <taxon>Craniata</taxon>
        <taxon>Vertebrata</taxon>
        <taxon>Euteleostomi</taxon>
        <taxon>Mammalia</taxon>
        <taxon>Eutheria</taxon>
        <taxon>Euarchontoglires</taxon>
        <taxon>Primates</taxon>
        <taxon>Haplorrhini</taxon>
        <taxon>Catarrhini</taxon>
        <taxon>Hominidae</taxon>
        <taxon>Homo</taxon>
    </lineage>
</organism>
<comment type="function">
    <text evidence="1 2 3 9 11 13 14 15 16 17 18 19 20 21 22 23 24 26 27 29">Multifunctional ATP-dependent helicase that unwinds G-quadruplex (G4) structures (PubMed:16150737, PubMed:18854321, PubMed:20472641, PubMed:21586581). Plays a role in many biological processes such as genomic integrity, gene expression regulations and as a sensor to initiate antiviral responses (PubMed:14731398, PubMed:18279852, PubMed:21993297, PubMed:22238380, PubMed:25579584). G4 structures correspond to helical structures containing guanine tetrads (By similarity). Binds with high affinity to and unwinds G4 structures that are formed in nucleic acids (G4-DNA and G4-RNA) (PubMed:16150737, PubMed:18842585, PubMed:20472641, PubMed:21586581, PubMed:24369427, PubMed:26195789). Plays a role in genomic integrity (PubMed:22238380). Converts the G4-RNA structure present in telomerase RNA template component (TREC) into a double-stranded RNA to promote P1 helix formation that acts as a template boundary ensuring accurate reverse transcription (PubMed:20472641, PubMed:21149580, PubMed:21846770, PubMed:22238380, PubMed:24151078, PubMed:25579584). Plays a role in transcriptional regulation (PubMed:21586581, PubMed:21993297). Resolves G4-DNA structures in promoters of genes, such as YY1, KIT/c-kit and ALPL and positively regulates their expression (PubMed:21993297). Plays a role in post-transcriptional regulation (PubMed:27940037). Unwinds a G4-RNA structure located in the 3'-UTR polyadenylation site of the pre-mRNA TP53 and stimulates TP53 pre-mRNA 3'-end processing in response to ultraviolet (UV)-induced DNA damage (PubMed:27940037). Binds to the precursor-microRNA-134 (pre-miR-134) terminal loop and regulates its transport into the synapto-dendritic compartment (By similarity). Involved in the pre-miR-134-dependent inhibition of target gene expression and the control of dendritic spine size (By similarity). Plays a role in the regulation of cytoplasmic mRNA translation and mRNA stability (PubMed:24369427, PubMed:26489465). Binds to both G4-RNA structures and alternative non-quadruplex-forming sequence within the 3'-UTR of the PITX1 mRNA regulating negatively PITX1 protein expression (PubMed:24369427). Binds to both G4-RNA structure in the 5'-UTR and AU-rich elements (AREs) localized in the 3'-UTR of NKX2-5 mRNA to either stimulate protein translation or induce mRNA decay in an ELAVL1-dependent manner, respectively (PubMed:26489465). Also binds to ARE sequences present in several mRNAs mediating exosome-mediated 3'-5' mRNA degradation (PubMed:14731398, PubMed:18279852). Involved in cytoplasmic urokinase-type plasminogen activator (uPA) mRNA decay (PubMed:14731398). Component of a multi-helicase-TICAM1 complex that acts as a cytoplasmic sensor of viral double-stranded RNA (dsRNA) and plays a role in the activation of a cascade of antiviral responses including the induction of pro-inflammatory cytokines via the adapter molecule TICAM1 (By similarity). Required for early embryonic development and hematopoiesis. Involved in the regulation of cardioblast differentiation and proliferation during heart development. Involved in spermatogonia differentiation. May play a role in ossification (By similarity).</text>
</comment>
<comment type="catalytic activity">
    <reaction evidence="11 14 18 19 24">
        <text>ATP + H2O = ADP + phosphate + H(+)</text>
        <dbReference type="Rhea" id="RHEA:13065"/>
        <dbReference type="ChEBI" id="CHEBI:15377"/>
        <dbReference type="ChEBI" id="CHEBI:15378"/>
        <dbReference type="ChEBI" id="CHEBI:30616"/>
        <dbReference type="ChEBI" id="CHEBI:43474"/>
        <dbReference type="ChEBI" id="CHEBI:456216"/>
        <dbReference type="EC" id="3.6.4.12"/>
    </reaction>
</comment>
<comment type="catalytic activity">
    <reaction evidence="11 14 18 19 24">
        <text>ATP + H2O = ADP + phosphate + H(+)</text>
        <dbReference type="Rhea" id="RHEA:13065"/>
        <dbReference type="ChEBI" id="CHEBI:15377"/>
        <dbReference type="ChEBI" id="CHEBI:15378"/>
        <dbReference type="ChEBI" id="CHEBI:30616"/>
        <dbReference type="ChEBI" id="CHEBI:43474"/>
        <dbReference type="ChEBI" id="CHEBI:456216"/>
        <dbReference type="EC" id="3.6.4.13"/>
    </reaction>
</comment>
<comment type="cofactor">
    <cofactor evidence="11 19">
        <name>Mg(2+)</name>
        <dbReference type="ChEBI" id="CHEBI:18420"/>
    </cofactor>
</comment>
<comment type="activity regulation">
    <text evidence="9">ATPase activity is enhanced in the presence of homomeric poly(U) RNAs, but not by double-stranded DNA (dsDNA), double-stranded RNA (dsRNA) and tRNA.</text>
</comment>
<comment type="subunit">
    <text evidence="3 9 12 13 19 25 27">Found in a multi-helicase-TICAM1 complex at least composed of DHX36, DDX1, DDX21 and TICAM1; this complex exists in resting cells with or without dsRNA poly(I:C) ligand stimulation (By similarity). Interacts (via C-terminus) with TICAM1 (via TIR domain) (By similarity). Interacts (via C-terminus) with DDX21; this interaction serves as bridges to TICAM1 (By similarity). Interacts with TERT; this interaction is dependent on the ability of DHX36 to bind to the G-quadruplex RNA (G4-RNA) structure present in the telomerase RNA template component (TERC) (PubMed:21846770). Interacts with DKC1; this interaction is dependent on the ability of DHX36 to bind to the G4-RNA structure present in TERC (PubMed:21846770). Interacts with PARN; this interaction stimulates PARN to enhance uPA mRNA decay (PubMed:14731398). Interacts with EXOSC3; this interaction occurs in a RNase-insensitive manner (PubMed:14731398). Interacts with EXOSC10; this interaction occurs in a RNase-insensitive manner (PubMed:14731398). Interacts with ILF3; this interaction occurs in a RNA-dependent manner (PubMed:14731398). Interacts with ELAVL1; this interaction occurs in an RNA-dependent manner (PubMed:14731398, PubMed:26489465). Interacts with DDX5; this interaction occurs in a RNA-dependent manner (PubMed:18279852). Interacts with DDX17; this interaction occurs in a RNA-dependent manner (PubMed:18279852). Interacts with HDAC1; this interaction occurs in a RNA-dependent manner (PubMed:18279852). Interacts with HDAC3; this interaction occurs in a RNA-dependent manner (PubMed:18279852). Interacts with HDAC4 (By similarity). Interacts with AGO1 (PubMed:17932509). Interacts with AGO2 (PubMed:17932509). Interacts with ERCC6 (PubMed:26030138).</text>
</comment>
<comment type="interaction">
    <interactant intactId="EBI-25868628">
        <id>Q9H2U1-3</id>
    </interactant>
    <interactant intactId="EBI-712096">
        <id>P30519</id>
        <label>HMOX2</label>
    </interactant>
    <organismsDiffer>false</organismsDiffer>
    <experiments>3</experiments>
</comment>
<comment type="interaction">
    <interactant intactId="EBI-25868628">
        <id>Q9H2U1-3</id>
    </interactant>
    <interactant intactId="EBI-286642">
        <id>P62826</id>
        <label>RAN</label>
    </interactant>
    <organismsDiffer>false</organismsDiffer>
    <experiments>3</experiments>
</comment>
<comment type="subcellular location">
    <subcellularLocation>
        <location evidence="13 15">Nucleus</location>
    </subcellularLocation>
    <subcellularLocation>
        <location evidence="13 15">Cytoplasm</location>
    </subcellularLocation>
    <subcellularLocation>
        <location evidence="3">Cytoplasm</location>
        <location evidence="3">Cytosol</location>
    </subcellularLocation>
    <subcellularLocation>
        <location evidence="15">Cytoplasm</location>
        <location evidence="15">Stress granule</location>
    </subcellularLocation>
    <subcellularLocation>
        <location evidence="13">Nucleus speckle</location>
    </subcellularLocation>
    <subcellularLocation>
        <location evidence="16">Chromosome</location>
        <location evidence="16">Telomere</location>
    </subcellularLocation>
    <subcellularLocation>
        <location evidence="3">Mitochondrion</location>
    </subcellularLocation>
    <subcellularLocation>
        <location evidence="1">Perikaryon</location>
    </subcellularLocation>
    <subcellularLocation>
        <location evidence="1">Cell projection</location>
        <location evidence="1">Dendrite</location>
    </subcellularLocation>
    <subcellularLocation>
        <location evidence="1">Cell projection</location>
        <location evidence="1">Axon</location>
    </subcellularLocation>
    <text evidence="3 13 15">Predominantly localized in the nucleus (PubMed:18279852). Colocalizes with SRSF2 in nuclear speckles (PubMed:18279852). Colocalizes with DDX5 in nucleolar caps upon transcription inhibition (PubMed:18279852). Accumulates and colocalized with TIA1 in cytoplasmic stress granules (SGs) in an arsenite-, heat shock- and RNA-binding-dependent manner (PubMed:18854321). Shuttles into and out of SGs in an ATPase-dependent manner (PubMed:18854321). Colocalizes in the cytosol with the multi-helicase-TICAM1 complex that translocates to the mitochondria upon poly(I:C) RNA ligand stimulation (By similarity).</text>
</comment>
<comment type="subcellular location">
    <molecule>Isoform 1</molecule>
    <subcellularLocation>
        <location evidence="9">Nucleus</location>
    </subcellularLocation>
    <subcellularLocation>
        <location evidence="9">Cytoplasm</location>
    </subcellularLocation>
    <text evidence="9">Preferentially localized in the nucleus (PubMed:14731398). Excluded from nucleoli (PubMed:14731398).</text>
</comment>
<comment type="subcellular location">
    <molecule>Isoform 2</molecule>
    <subcellularLocation>
        <location evidence="9">Nucleus</location>
    </subcellularLocation>
    <subcellularLocation>
        <location evidence="9">Cytoplasm</location>
    </subcellularLocation>
    <text evidence="9">Preferentially localized in the cytoplasm (PubMed:14731398). Excluded from nucleoli (PubMed:14731398).</text>
</comment>
<comment type="alternative products">
    <event type="alternative splicing"/>
    <isoform>
        <id>Q9H2U1-1</id>
        <name>1</name>
        <name evidence="31">Nuclear isoform</name>
        <sequence type="displayed"/>
    </isoform>
    <isoform>
        <id>Q9H2U1-2</id>
        <name>2</name>
        <name>Cytoplasmic isoform</name>
        <name evidence="31">RHAU-delta 14</name>
        <sequence type="described" ref="VSP_020006"/>
    </isoform>
    <isoform>
        <id>Q9H2U1-3</id>
        <name>3</name>
        <sequence type="described" ref="VSP_020007"/>
    </isoform>
</comment>
<comment type="tissue specificity">
    <text evidence="8 9">Highly expressed in testis.</text>
</comment>
<comment type="domain">
    <text evidence="2 15">The DHX36-specific motif (DSM) form folds into a DNA-binding-induced alpha-helix that together with the oligonucleotide and oligosaccharide-binding-fold-like (OB-fold-like) subdomain, selectively bind to Myc-promoter G4-DNA-containing structure in an ATP-dependent manner. Upon G4-DNA-binding, DHX36 pulls on DSM in the 3'-direction, inducing rearrangement of the RecA-like 1 and 2 and the degenerate-winged-helix (WH) regions; these rearrangements are propbably responsible for the ATP-independent repetitive G4-DNA unfolding activity, one residue at a time. Upon resolving of G4-DNA into separate nucleotide strands, and ATP hydrolysis, the apoprotein of DHX36 seems incompatible with G4-DNA-binding (By similarity). The N-terminus is necessary for its recruitment to cytoplasmic stress granules (SGs) upon arsenite-induced treatment (PubMed:18854321).</text>
</comment>
<comment type="miscellaneous">
    <molecule>Isoform 2</molecule>
    <text evidence="9">More unstable than isoform 1.</text>
</comment>
<comment type="similarity">
    <text evidence="34">Belongs to the DEAD box helicase family. DEAH subfamily.</text>
</comment>